<accession>P0DI32</accession>
<dbReference type="EMBL" id="GO663194">
    <property type="status" value="NOT_ANNOTATED_CDS"/>
    <property type="molecule type" value="mRNA"/>
</dbReference>
<dbReference type="SMR" id="P0DI32"/>
<dbReference type="GO" id="GO:0005886">
    <property type="term" value="C:plasma membrane"/>
    <property type="evidence" value="ECO:0007669"/>
    <property type="project" value="UniProtKB-SubCell"/>
</dbReference>
<dbReference type="GO" id="GO:0071555">
    <property type="term" value="P:cell wall organization"/>
    <property type="evidence" value="ECO:0007669"/>
    <property type="project" value="UniProtKB-KW"/>
</dbReference>
<dbReference type="InterPro" id="IPR006459">
    <property type="entry name" value="CASP/CASPL"/>
</dbReference>
<dbReference type="InterPro" id="IPR006702">
    <property type="entry name" value="CASP_dom"/>
</dbReference>
<dbReference type="InterPro" id="IPR044173">
    <property type="entry name" value="CASPL"/>
</dbReference>
<dbReference type="NCBIfam" id="TIGR01569">
    <property type="entry name" value="A_tha_TIGR01569"/>
    <property type="match status" value="1"/>
</dbReference>
<dbReference type="PANTHER" id="PTHR36488:SF11">
    <property type="entry name" value="CASP-LIKE PROTEIN"/>
    <property type="match status" value="1"/>
</dbReference>
<dbReference type="PANTHER" id="PTHR36488">
    <property type="entry name" value="CASP-LIKE PROTEIN 1U1"/>
    <property type="match status" value="1"/>
</dbReference>
<dbReference type="Pfam" id="PF04535">
    <property type="entry name" value="CASP_dom"/>
    <property type="match status" value="1"/>
</dbReference>
<organism>
    <name type="scientific">Taraxacum kok-saghyz</name>
    <name type="common">Russian dandelion</name>
    <dbReference type="NCBI Taxonomy" id="333970"/>
    <lineage>
        <taxon>Eukaryota</taxon>
        <taxon>Viridiplantae</taxon>
        <taxon>Streptophyta</taxon>
        <taxon>Embryophyta</taxon>
        <taxon>Tracheophyta</taxon>
        <taxon>Spermatophyta</taxon>
        <taxon>Magnoliopsida</taxon>
        <taxon>eudicotyledons</taxon>
        <taxon>Gunneridae</taxon>
        <taxon>Pentapetalae</taxon>
        <taxon>asterids</taxon>
        <taxon>campanulids</taxon>
        <taxon>Asterales</taxon>
        <taxon>Asteraceae</taxon>
        <taxon>Cichorioideae</taxon>
        <taxon>Cichorieae</taxon>
        <taxon>Crepidinae</taxon>
        <taxon>Taraxacum</taxon>
    </lineage>
</organism>
<keyword id="KW-1003">Cell membrane</keyword>
<keyword id="KW-0961">Cell wall biogenesis/degradation</keyword>
<keyword id="KW-0472">Membrane</keyword>
<keyword id="KW-0812">Transmembrane</keyword>
<keyword id="KW-1133">Transmembrane helix</keyword>
<evidence type="ECO:0000250" key="1"/>
<evidence type="ECO:0000255" key="2"/>
<evidence type="ECO:0000256" key="3">
    <source>
        <dbReference type="SAM" id="MobiDB-lite"/>
    </source>
</evidence>
<evidence type="ECO:0000305" key="4"/>
<protein>
    <recommendedName>
        <fullName>Casparian strip membrane protein 1</fullName>
        <shortName>TkCASP1</shortName>
    </recommendedName>
</protein>
<name>CASP1_TARKO</name>
<feature type="chain" id="PRO_0000417808" description="Casparian strip membrane protein 1">
    <location>
        <begin position="1"/>
        <end position="207"/>
    </location>
</feature>
<feature type="topological domain" description="Cytoplasmic" evidence="2">
    <location>
        <begin position="1"/>
        <end position="48"/>
    </location>
</feature>
<feature type="transmembrane region" description="Helical" evidence="2">
    <location>
        <begin position="49"/>
        <end position="69"/>
    </location>
</feature>
<feature type="topological domain" description="Extracellular" evidence="2">
    <location>
        <begin position="70"/>
        <end position="98"/>
    </location>
</feature>
<feature type="transmembrane region" description="Helical" evidence="2">
    <location>
        <begin position="99"/>
        <end position="119"/>
    </location>
</feature>
<feature type="topological domain" description="Cytoplasmic" evidence="2">
    <location>
        <begin position="120"/>
        <end position="138"/>
    </location>
</feature>
<feature type="transmembrane region" description="Helical" evidence="2">
    <location>
        <begin position="139"/>
        <end position="159"/>
    </location>
</feature>
<feature type="topological domain" description="Extracellular" evidence="2">
    <location>
        <begin position="160"/>
        <end position="184"/>
    </location>
</feature>
<feature type="transmembrane region" description="Helical" evidence="2">
    <location>
        <begin position="185"/>
        <end position="205"/>
    </location>
</feature>
<feature type="topological domain" description="Cytoplasmic" evidence="2">
    <location>
        <begin position="206"/>
        <end position="207"/>
    </location>
</feature>
<feature type="region of interest" description="Disordered" evidence="3">
    <location>
        <begin position="1"/>
        <end position="24"/>
    </location>
</feature>
<feature type="compositionally biased region" description="Polar residues" evidence="3">
    <location>
        <begin position="1"/>
        <end position="12"/>
    </location>
</feature>
<comment type="function">
    <text evidence="1">Regulates membrane-cell wall junctions and localized cell wall deposition. Required for establishment of the Casparian strip membrane domain (CSD) and the subsequent formation of Casparian strips, a cell wall modification of the root endodermis that determines an apoplastic barrier between the intraorganismal apoplasm and the extraorganismal apoplasm and prevents lateral diffusion (By similarity).</text>
</comment>
<comment type="subunit">
    <text evidence="1">Homodimer and heterodimers.</text>
</comment>
<comment type="subcellular location">
    <subcellularLocation>
        <location evidence="1">Cell membrane</location>
        <topology evidence="1">Multi-pass membrane protein</topology>
    </subcellularLocation>
    <text evidence="1">Very restricted localization following a belt shape within the plasma membrane which coincides with the position of the Casparian strip membrane domain in the root endodermis.</text>
</comment>
<comment type="similarity">
    <text evidence="4">Belongs to the Casparian strip membrane proteins (CASP) family.</text>
</comment>
<proteinExistence type="evidence at transcript level"/>
<sequence>MEGESTAVNITETPKERKGKAPLLAPPPASGGIKTIVQKAPKGGYKRGLAVFDVVLRIAGIAAALGAVIAMGSTDQTLPFFTQFFQFKAEFDDLPVFTFFVIANAITAAYLALSIPISIVCIIRPHLVGPRVLLTFLDTVMVGLTTAAAGGAASIVYLAHNGNSDANWPAICQQFNDFCQEVSGAVVASFITVVVLMFLIVLSAFSL</sequence>
<reference key="1">
    <citation type="submission" date="2010-04" db="EMBL/GenBank/DDBJ databases">
        <title>Genomic and proteomic identification of candidates genes and proteins for rubber biosynthesis in Taraxacum kok-saghyz (Russian dandelion).</title>
        <authorList>
            <person name="Collins J."/>
            <person name="Whalen M.C."/>
            <person name="Nural-Taban A.H."/>
            <person name="Scott D."/>
            <person name="Hathwaik U."/>
            <person name="Lazo G.R."/>
            <person name="Cox K."/>
            <person name="Durant K."/>
            <person name="Woolsey R."/>
            <person name="Schegg K."/>
            <person name="Gollery M."/>
            <person name="Cornish K."/>
            <person name="McMahan C."/>
            <person name="Schooley C."/>
            <person name="Shintani D."/>
        </authorList>
    </citation>
    <scope>NUCLEOTIDE SEQUENCE [LARGE SCALE MRNA]</scope>
    <source>
        <tissue>Root</tissue>
    </source>
</reference>
<reference key="2">
    <citation type="journal article" date="2014" name="Plant Physiol.">
        <title>Functional and evolutionary analysis of the CASPARIAN STRIP MEMBRANE DOMAIN PROTEIN family.</title>
        <authorList>
            <person name="Roppolo D."/>
            <person name="Boeckmann B."/>
            <person name="Pfister A."/>
            <person name="Boutet E."/>
            <person name="Rubio M.C."/>
            <person name="Denervaud-Tendon V."/>
            <person name="Vermeer J.E."/>
            <person name="Gheyselinck J."/>
            <person name="Xenarios I."/>
            <person name="Geldner N."/>
        </authorList>
    </citation>
    <scope>GENE FAMILY</scope>
    <scope>NOMENCLATURE</scope>
</reference>